<accession>O19907</accession>
<evidence type="ECO:0000250" key="1"/>
<evidence type="ECO:0000305" key="2"/>
<reference key="1">
    <citation type="journal article" date="2000" name="J. Mol. Evol.">
        <title>The structure and gene repertoire of an ancient red algal plastid genome.</title>
        <authorList>
            <person name="Gloeckner G."/>
            <person name="Rosenthal A."/>
            <person name="Valentin K.-U."/>
        </authorList>
    </citation>
    <scope>NUCLEOTIDE SEQUENCE [LARGE SCALE GENOMIC DNA]</scope>
    <source>
        <strain>RK-1</strain>
    </source>
</reference>
<geneLocation type="chloroplast"/>
<name>RPOZ_CYACA</name>
<organism>
    <name type="scientific">Cyanidium caldarium</name>
    <name type="common">Red alga</name>
    <dbReference type="NCBI Taxonomy" id="2771"/>
    <lineage>
        <taxon>Eukaryota</taxon>
        <taxon>Rhodophyta</taxon>
        <taxon>Bangiophyceae</taxon>
        <taxon>Cyanidiales</taxon>
        <taxon>Cyanidiaceae</taxon>
        <taxon>Cyanidium</taxon>
    </lineage>
</organism>
<dbReference type="EC" id="2.7.7.6"/>
<dbReference type="EMBL" id="AF022186">
    <property type="protein sequence ID" value="AAB82682.1"/>
    <property type="molecule type" value="Genomic_DNA"/>
</dbReference>
<dbReference type="PIR" id="T11975">
    <property type="entry name" value="T11975"/>
</dbReference>
<dbReference type="RefSeq" id="NP_045079.1">
    <property type="nucleotide sequence ID" value="NC_001840.1"/>
</dbReference>
<dbReference type="SMR" id="O19907"/>
<dbReference type="GeneID" id="800160"/>
<dbReference type="GO" id="GO:0009507">
    <property type="term" value="C:chloroplast"/>
    <property type="evidence" value="ECO:0007669"/>
    <property type="project" value="UniProtKB-SubCell"/>
</dbReference>
<dbReference type="GO" id="GO:0000428">
    <property type="term" value="C:DNA-directed RNA polymerase complex"/>
    <property type="evidence" value="ECO:0007669"/>
    <property type="project" value="UniProtKB-KW"/>
</dbReference>
<dbReference type="GO" id="GO:0005739">
    <property type="term" value="C:mitochondrion"/>
    <property type="evidence" value="ECO:0007669"/>
    <property type="project" value="GOC"/>
</dbReference>
<dbReference type="GO" id="GO:0003677">
    <property type="term" value="F:DNA binding"/>
    <property type="evidence" value="ECO:0007669"/>
    <property type="project" value="UniProtKB-UniRule"/>
</dbReference>
<dbReference type="GO" id="GO:0003899">
    <property type="term" value="F:DNA-directed RNA polymerase activity"/>
    <property type="evidence" value="ECO:0007669"/>
    <property type="project" value="UniProtKB-UniRule"/>
</dbReference>
<dbReference type="GO" id="GO:0006351">
    <property type="term" value="P:DNA-templated transcription"/>
    <property type="evidence" value="ECO:0007669"/>
    <property type="project" value="UniProtKB-UniRule"/>
</dbReference>
<dbReference type="HAMAP" id="MF_00366">
    <property type="entry name" value="RNApol_bact_RpoZ"/>
    <property type="match status" value="1"/>
</dbReference>
<dbReference type="InterPro" id="IPR003716">
    <property type="entry name" value="DNA-dir_RNA_pol_omega"/>
</dbReference>
<protein>
    <recommendedName>
        <fullName>Putative DNA-directed RNA polymerase subunit omega</fullName>
        <shortName>PEP</shortName>
        <ecNumber>2.7.7.6</ecNumber>
    </recommendedName>
    <alternativeName>
        <fullName>Plastid-encoded RNA polymerase omega subunit</fullName>
        <shortName>RNA polymerase omega subunit</shortName>
    </alternativeName>
</protein>
<keyword id="KW-0150">Chloroplast</keyword>
<keyword id="KW-0240">DNA-directed RNA polymerase</keyword>
<keyword id="KW-0548">Nucleotidyltransferase</keyword>
<keyword id="KW-0934">Plastid</keyword>
<keyword id="KW-0804">Transcription</keyword>
<keyword id="KW-0808">Transferase</keyword>
<gene>
    <name type="primary">rpoZ</name>
    <name type="synonym">ycf13</name>
    <name type="synonym">ycf61</name>
</gene>
<feature type="chain" id="PRO_0000129020" description="Putative DNA-directed RNA polymerase subunit omega">
    <location>
        <begin position="1"/>
        <end position="72"/>
    </location>
</feature>
<sequence length="72" mass="8330">MVDKRNHYFLLHKIEELLELSASKYKTTMEIANYAKKTKNRNANKSNIKPVILAILEISGELKLNDINKLTN</sequence>
<comment type="function">
    <text evidence="1">May be involved in RNA polymerase activity.</text>
</comment>
<comment type="catalytic activity">
    <reaction>
        <text>RNA(n) + a ribonucleoside 5'-triphosphate = RNA(n+1) + diphosphate</text>
        <dbReference type="Rhea" id="RHEA:21248"/>
        <dbReference type="Rhea" id="RHEA-COMP:14527"/>
        <dbReference type="Rhea" id="RHEA-COMP:17342"/>
        <dbReference type="ChEBI" id="CHEBI:33019"/>
        <dbReference type="ChEBI" id="CHEBI:61557"/>
        <dbReference type="ChEBI" id="CHEBI:140395"/>
        <dbReference type="EC" id="2.7.7.6"/>
    </reaction>
</comment>
<comment type="subcellular location">
    <subcellularLocation>
        <location>Plastid</location>
        <location>Chloroplast</location>
    </subcellularLocation>
</comment>
<comment type="similarity">
    <text evidence="2">Belongs to the RNA polymerase subunit omega family.</text>
</comment>
<proteinExistence type="inferred from homology"/>